<feature type="chain" id="PRO_0000084025" description="Transposable element Hobo transposase">
    <location>
        <begin position="1"/>
        <end position="644"/>
    </location>
</feature>
<feature type="repeat" description="1">
    <location>
        <begin position="521"/>
        <end position="523"/>
    </location>
</feature>
<feature type="repeat" description="2">
    <location>
        <begin position="524"/>
        <end position="526"/>
    </location>
</feature>
<feature type="repeat" description="3">
    <location>
        <begin position="527"/>
        <end position="529"/>
    </location>
</feature>
<feature type="repeat" description="4">
    <location>
        <begin position="530"/>
        <end position="532"/>
    </location>
</feature>
<feature type="repeat" description="5">
    <location>
        <begin position="533"/>
        <end position="535"/>
    </location>
</feature>
<feature type="repeat" description="6">
    <location>
        <begin position="536"/>
        <end position="538"/>
    </location>
</feature>
<feature type="repeat" description="7">
    <location>
        <begin position="539"/>
        <end position="541"/>
    </location>
</feature>
<feature type="repeat" description="8">
    <location>
        <begin position="542"/>
        <end position="544"/>
    </location>
</feature>
<feature type="repeat" description="9">
    <location>
        <begin position="545"/>
        <end position="547"/>
    </location>
</feature>
<feature type="repeat" description="10">
    <location>
        <begin position="548"/>
        <end position="550"/>
    </location>
</feature>
<feature type="zinc finger region" description="BED-type" evidence="1">
    <location>
        <begin position="73"/>
        <end position="131"/>
    </location>
</feature>
<feature type="region of interest" description="Disordered" evidence="2">
    <location>
        <begin position="514"/>
        <end position="560"/>
    </location>
</feature>
<feature type="region of interest" description="10 X 3 AA tandem repeats of T-P-E">
    <location>
        <begin position="521"/>
        <end position="550"/>
    </location>
</feature>
<feature type="sequence variant" evidence="3">
    <location>
        <begin position="521"/>
        <end position="541"/>
    </location>
</feature>
<feature type="sequence conflict" description="In Ref. 2; AAA51465." evidence="4" ref="2">
    <original>P</original>
    <variation>L</variation>
    <location>
        <position position="576"/>
    </location>
</feature>
<feature type="sequence conflict" description="In Ref. 2; AAA51465." evidence="4" ref="2">
    <original>ELKECFP</original>
    <variation>AAERVFSLAGNIITEKRNRLCPKSVDSLLFLHSYYKNLNNSQ</variation>
    <location>
        <begin position="638"/>
        <end position="644"/>
    </location>
</feature>
<accession>P12258</accession>
<organism>
    <name type="scientific">Drosophila melanogaster</name>
    <name type="common">Fruit fly</name>
    <dbReference type="NCBI Taxonomy" id="7227"/>
    <lineage>
        <taxon>Eukaryota</taxon>
        <taxon>Metazoa</taxon>
        <taxon>Ecdysozoa</taxon>
        <taxon>Arthropoda</taxon>
        <taxon>Hexapoda</taxon>
        <taxon>Insecta</taxon>
        <taxon>Pterygota</taxon>
        <taxon>Neoptera</taxon>
        <taxon>Endopterygota</taxon>
        <taxon>Diptera</taxon>
        <taxon>Brachycera</taxon>
        <taxon>Muscomorpha</taxon>
        <taxon>Ephydroidea</taxon>
        <taxon>Drosophilidae</taxon>
        <taxon>Drosophila</taxon>
        <taxon>Sophophora</taxon>
    </lineage>
</organism>
<name>HOBOT_DROME</name>
<sequence>MAPYIMIVEFLCLWSSVSAVNCPFFVFYDAITSLLGFSIIWKPKEKVTIMAEAADFVKNKINNGTYSVANKHKGKSVIWSILCDILKEDETVLDGWLFCRQCQKVLKFLHKNTSNLSRHKCCLTLRRPTELKIVSENDKKVAIEKCTQWVVQDCRPFSAVTGAGFKNLVKFFLQIGAIYGEQVDVDDLLPDPTTLSRKAKSDAEEKRSLISSEIKKAVDSGRASATVDMWTDQYVQRNFLGITFHYEKEFKLCDMILGLKSMNFQKSTAENILMKIKGLFSEFNVENIDNVKFVTDRGANIKKALEGNTRLNCSSHLLSNVLEKSFNEANELKKIVKSCKKIVKYCKKSNLQHTLETTLKSACPTRWNSNYKMMKSILDNWRSVDKILGEADIHVDFNKSSLKVVVDILGDFERIFKKLQTSSSPSICFVLPSISKILELCEPNILDLSAAALLKERILENIRKIWMANLSIWHKAAFFLYPPAAHLQEEDILEIKVFCISQIQVPISYTLSLESTETPRTPETPETPETPETPETPETPETPETPETPESLESPNLFPKKNKTISSENEFFFPKPVTESNSNFNESPLDEIERYIRQRVPLSQNFEVIEWWKNNANLYPQLSKLALKLLSIPASSAELKECFP</sequence>
<protein>
    <recommendedName>
        <fullName>Transposable element Hobo transposase</fullName>
    </recommendedName>
</protein>
<keyword id="KW-0229">DNA integration</keyword>
<keyword id="KW-0233">DNA recombination</keyword>
<keyword id="KW-0238">DNA-binding</keyword>
<keyword id="KW-0479">Metal-binding</keyword>
<keyword id="KW-0539">Nucleus</keyword>
<keyword id="KW-0677">Repeat</keyword>
<keyword id="KW-0814">Transposable element</keyword>
<keyword id="KW-0862">Zinc</keyword>
<keyword id="KW-0863">Zinc-finger</keyword>
<comment type="function">
    <text evidence="3">Essential for hobo transposase activity.</text>
</comment>
<comment type="subcellular location">
    <subcellularLocation>
        <location evidence="3">Nucleus</location>
    </subcellularLocation>
</comment>
<comment type="polymorphism">
    <text>The number of repeats is highly polymorphic and varies among different strains.</text>
</comment>
<comment type="sequence caution" evidence="4">
    <conflict type="erroneous initiation">
        <sequence resource="EMBL-CDS" id="AAA51465"/>
    </conflict>
</comment>
<evidence type="ECO:0000255" key="1">
    <source>
        <dbReference type="PROSITE-ProRule" id="PRU00027"/>
    </source>
</evidence>
<evidence type="ECO:0000256" key="2">
    <source>
        <dbReference type="SAM" id="MobiDB-lite"/>
    </source>
</evidence>
<evidence type="ECO:0000269" key="3">
    <source>
    </source>
</evidence>
<evidence type="ECO:0000305" key="4"/>
<gene>
    <name type="primary">T</name>
</gene>
<reference key="1">
    <citation type="journal article" date="1986" name="EMBO J.">
        <title>The structure of hobo transposable elements and their insertion sites.</title>
        <authorList>
            <person name="Streck R.D."/>
            <person name="Macgaffey J.E."/>
            <person name="Beckendorf S.K."/>
        </authorList>
    </citation>
    <scope>NUCLEOTIDE SEQUENCE [GENOMIC DNA]</scope>
</reference>
<reference key="2">
    <citation type="journal article" date="1991" name="Cell">
        <title>Evidence for a common evolutionary origin of inverted repeat transposons in Drosophila and plants: hobo, Activator, and Tam3.</title>
        <authorList>
            <person name="Calvi B.R."/>
            <person name="Hong T.J."/>
            <person name="Findley S.D."/>
            <person name="Gelbart W.M."/>
        </authorList>
    </citation>
    <scope>NUCLEOTIDE SEQUENCE [GENOMIC DNA]</scope>
    <scope>FUNCTION</scope>
    <scope>SUBCELLULAR LOCATION</scope>
    <scope>VARIANT 521-THR--GLU-541 DEL</scope>
</reference>
<proteinExistence type="predicted"/>
<dbReference type="EMBL" id="X04705">
    <property type="protein sequence ID" value="CAA28410.1"/>
    <property type="molecule type" value="Genomic_DNA"/>
</dbReference>
<dbReference type="EMBL" id="M69216">
    <property type="protein sequence ID" value="AAA51465.1"/>
    <property type="status" value="ALT_INIT"/>
    <property type="molecule type" value="Genomic_DNA"/>
</dbReference>
<dbReference type="PIR" id="A25684">
    <property type="entry name" value="A25684"/>
</dbReference>
<dbReference type="SMR" id="P12258"/>
<dbReference type="FlyBase" id="FBgn0014191">
    <property type="gene designation" value="hobo\T"/>
</dbReference>
<dbReference type="PRO" id="PR:P12258"/>
<dbReference type="GO" id="GO:0005634">
    <property type="term" value="C:nucleus"/>
    <property type="evidence" value="ECO:0007669"/>
    <property type="project" value="UniProtKB-SubCell"/>
</dbReference>
<dbReference type="GO" id="GO:0003677">
    <property type="term" value="F:DNA binding"/>
    <property type="evidence" value="ECO:0007669"/>
    <property type="project" value="UniProtKB-KW"/>
</dbReference>
<dbReference type="GO" id="GO:0046983">
    <property type="term" value="F:protein dimerization activity"/>
    <property type="evidence" value="ECO:0007669"/>
    <property type="project" value="InterPro"/>
</dbReference>
<dbReference type="GO" id="GO:0008270">
    <property type="term" value="F:zinc ion binding"/>
    <property type="evidence" value="ECO:0007669"/>
    <property type="project" value="UniProtKB-KW"/>
</dbReference>
<dbReference type="GO" id="GO:0015074">
    <property type="term" value="P:DNA integration"/>
    <property type="evidence" value="ECO:0007669"/>
    <property type="project" value="UniProtKB-KW"/>
</dbReference>
<dbReference type="GO" id="GO:0006310">
    <property type="term" value="P:DNA recombination"/>
    <property type="evidence" value="ECO:0007669"/>
    <property type="project" value="UniProtKB-KW"/>
</dbReference>
<dbReference type="Gene3D" id="1.10.10.1070">
    <property type="entry name" value="Zinc finger, BED domain-containing"/>
    <property type="match status" value="1"/>
</dbReference>
<dbReference type="InterPro" id="IPR008906">
    <property type="entry name" value="HATC_C_dom"/>
</dbReference>
<dbReference type="InterPro" id="IPR018473">
    <property type="entry name" value="Hermes_transposase_DNA-db"/>
</dbReference>
<dbReference type="InterPro" id="IPR012337">
    <property type="entry name" value="RNaseH-like_sf"/>
</dbReference>
<dbReference type="InterPro" id="IPR052717">
    <property type="entry name" value="Vacuolar_transposase_reg"/>
</dbReference>
<dbReference type="InterPro" id="IPR003656">
    <property type="entry name" value="Znf_BED"/>
</dbReference>
<dbReference type="PANTHER" id="PTHR46169">
    <property type="entry name" value="DNA REPLICATION-RELATED ELEMENT FACTOR, ISOFORM A"/>
    <property type="match status" value="1"/>
</dbReference>
<dbReference type="PANTHER" id="PTHR46169:SF29">
    <property type="entry name" value="DNA REPLICATION-RELATED ELEMENT FACTOR, ISOFORM A"/>
    <property type="match status" value="1"/>
</dbReference>
<dbReference type="Pfam" id="PF10683">
    <property type="entry name" value="DBD_Tnp_Hermes"/>
    <property type="match status" value="1"/>
</dbReference>
<dbReference type="Pfam" id="PF05699">
    <property type="entry name" value="Dimer_Tnp_hAT"/>
    <property type="match status" value="1"/>
</dbReference>
<dbReference type="SMART" id="SM00614">
    <property type="entry name" value="ZnF_BED"/>
    <property type="match status" value="1"/>
</dbReference>
<dbReference type="SUPFAM" id="SSF140996">
    <property type="entry name" value="Hermes dimerisation domain"/>
    <property type="match status" value="1"/>
</dbReference>
<dbReference type="SUPFAM" id="SSF53098">
    <property type="entry name" value="Ribonuclease H-like"/>
    <property type="match status" value="1"/>
</dbReference>
<dbReference type="PROSITE" id="PS50808">
    <property type="entry name" value="ZF_BED"/>
    <property type="match status" value="1"/>
</dbReference>